<accession>Q28783</accession>
<organism>
    <name type="scientific">Pongo pygmaeus</name>
    <name type="common">Bornean orangutan</name>
    <dbReference type="NCBI Taxonomy" id="9600"/>
    <lineage>
        <taxon>Eukaryota</taxon>
        <taxon>Metazoa</taxon>
        <taxon>Chordata</taxon>
        <taxon>Craniata</taxon>
        <taxon>Vertebrata</taxon>
        <taxon>Euteleostomi</taxon>
        <taxon>Mammalia</taxon>
        <taxon>Eutheria</taxon>
        <taxon>Euarchontoglires</taxon>
        <taxon>Primates</taxon>
        <taxon>Haplorrhini</taxon>
        <taxon>Catarrhini</taxon>
        <taxon>Hominidae</taxon>
        <taxon>Pongo</taxon>
    </lineage>
</organism>
<proteinExistence type="inferred from homology"/>
<protein>
    <recommendedName>
        <fullName>Sex-determining region Y protein</fullName>
    </recommendedName>
    <alternativeName>
        <fullName>Testis-determining factor</fullName>
    </alternativeName>
</protein>
<comment type="function">
    <text evidence="1 2">Transcriptional regulator that controls a genetic switch in male development. It is necessary and sufficient for initiating male sex determination by directing the development of supporting cell precursors (pre-Sertoli cells) as Sertoli rather than granulosa cells. Involved in different aspects of gene regulation including promoter activation or repression. Binds to the DNA consensus sequence 5'-[AT]AACAA[AT]-3'. SRY HMG box recognizes DNA by partial intercalation in the minor groove and promotes DNA bending. Also involved in pre-mRNA splicing (By similarity). In male adult brain involved in the maintenance of motor functions of dopaminergic neurons (By similarity).</text>
</comment>
<comment type="subunit">
    <text evidence="2">Interacts with CALM, EP300, HDAC3, KPNB1, ZNF208 isoform KRAB-O, PARP1, SLC9A3R2 and WT1. The interaction with EP300 modulates its DNA-binding activity. The interaction with KPNB1 is sensitive to dissociation by Ran in the GTP-bound form. Interaction with PARP1 impaired its DNA-binding activity.</text>
</comment>
<comment type="subcellular location">
    <subcellularLocation>
        <location evidence="2">Nucleus speckle</location>
    </subcellularLocation>
    <subcellularLocation>
        <location evidence="2">Cytoplasm</location>
    </subcellularLocation>
    <subcellularLocation>
        <location evidence="2">Nucleus</location>
    </subcellularLocation>
</comment>
<comment type="PTM">
    <text evidence="2">Acetylation of Lys-136 contributes to its nuclear localization and enhances its interaction with KPNB1. Deacetylated by HDAC3.</text>
</comment>
<comment type="similarity">
    <text evidence="5">Belongs to the SRY family.</text>
</comment>
<comment type="online information" name="Protein Spotlight">
    <link uri="https://www.proteinspotlight.org/back_issues/080"/>
    <text>The tenuous nature of sex - Issue 80 of March 2007</text>
</comment>
<sequence>MQSYASAMLSVFNSDDYSPAVQQNIPALRRSSSFICTESYNSKYQCETGENSKGSVQDRVKRPMNAFIVWSRDQRRKMALENPKMRNSEISKQLGYQWKMLTEAEKWPFFQEAQKLQAMHREKYPNYKYRPRRKAKMLQKSCSSLPADPASVLCSEVLQLDNRLYRDDCTKATHSRLEHQLGHLPPINTASSPQQRDRYSHSTELYDNRVTLATKTYLDAAFYDNLQPSLSYV</sequence>
<feature type="chain" id="PRO_0000048705" description="Sex-determining region Y protein">
    <location>
        <begin position="1"/>
        <end position="233"/>
    </location>
</feature>
<feature type="DNA-binding region" description="HMG box" evidence="3">
    <location>
        <begin position="60"/>
        <end position="128"/>
    </location>
</feature>
<feature type="region of interest" description="Disordered" evidence="4">
    <location>
        <begin position="180"/>
        <end position="200"/>
    </location>
</feature>
<keyword id="KW-0007">Acetylation</keyword>
<keyword id="KW-0010">Activator</keyword>
<keyword id="KW-0112">Calmodulin-binding</keyword>
<keyword id="KW-0963">Cytoplasm</keyword>
<keyword id="KW-0221">Differentiation</keyword>
<keyword id="KW-0238">DNA-binding</keyword>
<keyword id="KW-0539">Nucleus</keyword>
<keyword id="KW-0726">Sexual differentiation</keyword>
<keyword id="KW-0804">Transcription</keyword>
<keyword id="KW-0805">Transcription regulation</keyword>
<evidence type="ECO:0000250" key="1">
    <source>
        <dbReference type="UniProtKB" id="P36394"/>
    </source>
</evidence>
<evidence type="ECO:0000250" key="2">
    <source>
        <dbReference type="UniProtKB" id="Q05066"/>
    </source>
</evidence>
<evidence type="ECO:0000255" key="3">
    <source>
        <dbReference type="PROSITE-ProRule" id="PRU00267"/>
    </source>
</evidence>
<evidence type="ECO:0000256" key="4">
    <source>
        <dbReference type="SAM" id="MobiDB-lite"/>
    </source>
</evidence>
<evidence type="ECO:0000305" key="5"/>
<name>SRY_PONPY</name>
<reference key="1">
    <citation type="journal article" date="1993" name="Nature">
        <title>Rapid sequence evolution of the mammalian sex-determining gene SRY.</title>
        <authorList>
            <person name="Whitfield L.S."/>
            <person name="Lovell-Badge R."/>
            <person name="Goodfellow P.N."/>
        </authorList>
    </citation>
    <scope>NUCLEOTIDE SEQUENCE [GENOMIC DNA]</scope>
</reference>
<dbReference type="EMBL" id="X86383">
    <property type="protein sequence ID" value="CAA60143.1"/>
    <property type="molecule type" value="Genomic_DNA"/>
</dbReference>
<dbReference type="PIR" id="S35561">
    <property type="entry name" value="S35561"/>
</dbReference>
<dbReference type="RefSeq" id="XP_063517023.1">
    <property type="nucleotide sequence ID" value="XM_063660953.1"/>
</dbReference>
<dbReference type="SMR" id="Q28783"/>
<dbReference type="GeneID" id="129025839"/>
<dbReference type="GO" id="GO:0005737">
    <property type="term" value="C:cytoplasm"/>
    <property type="evidence" value="ECO:0007669"/>
    <property type="project" value="UniProtKB-SubCell"/>
</dbReference>
<dbReference type="GO" id="GO:0016607">
    <property type="term" value="C:nuclear speck"/>
    <property type="evidence" value="ECO:0007669"/>
    <property type="project" value="UniProtKB-SubCell"/>
</dbReference>
<dbReference type="GO" id="GO:0005634">
    <property type="term" value="C:nucleus"/>
    <property type="evidence" value="ECO:0000250"/>
    <property type="project" value="UniProtKB"/>
</dbReference>
<dbReference type="GO" id="GO:0005516">
    <property type="term" value="F:calmodulin binding"/>
    <property type="evidence" value="ECO:0007669"/>
    <property type="project" value="UniProtKB-KW"/>
</dbReference>
<dbReference type="GO" id="GO:0001228">
    <property type="term" value="F:DNA-binding transcription activator activity, RNA polymerase II-specific"/>
    <property type="evidence" value="ECO:0007669"/>
    <property type="project" value="TreeGrafter"/>
</dbReference>
<dbReference type="GO" id="GO:0000978">
    <property type="term" value="F:RNA polymerase II cis-regulatory region sequence-specific DNA binding"/>
    <property type="evidence" value="ECO:0007669"/>
    <property type="project" value="TreeGrafter"/>
</dbReference>
<dbReference type="GO" id="GO:0030154">
    <property type="term" value="P:cell differentiation"/>
    <property type="evidence" value="ECO:0007669"/>
    <property type="project" value="UniProtKB-KW"/>
</dbReference>
<dbReference type="GO" id="GO:0030238">
    <property type="term" value="P:male sex determination"/>
    <property type="evidence" value="ECO:0007669"/>
    <property type="project" value="InterPro"/>
</dbReference>
<dbReference type="GO" id="GO:0007548">
    <property type="term" value="P:sex differentiation"/>
    <property type="evidence" value="ECO:0007669"/>
    <property type="project" value="UniProtKB-KW"/>
</dbReference>
<dbReference type="CDD" id="cd22034">
    <property type="entry name" value="HMG-box_SoxA_SRY"/>
    <property type="match status" value="1"/>
</dbReference>
<dbReference type="FunFam" id="1.10.30.10:FF:000002">
    <property type="entry name" value="transcription factor Sox-2"/>
    <property type="match status" value="1"/>
</dbReference>
<dbReference type="Gene3D" id="1.10.30.10">
    <property type="entry name" value="High mobility group box domain"/>
    <property type="match status" value="1"/>
</dbReference>
<dbReference type="InterPro" id="IPR009071">
    <property type="entry name" value="HMG_box_dom"/>
</dbReference>
<dbReference type="InterPro" id="IPR036910">
    <property type="entry name" value="HMG_box_dom_sf"/>
</dbReference>
<dbReference type="InterPro" id="IPR017253">
    <property type="entry name" value="SRY"/>
</dbReference>
<dbReference type="InterPro" id="IPR050140">
    <property type="entry name" value="SRY-related_HMG-box_TF-like"/>
</dbReference>
<dbReference type="PANTHER" id="PTHR10270:SF161">
    <property type="entry name" value="SEX-DETERMINING REGION Y PROTEIN"/>
    <property type="match status" value="1"/>
</dbReference>
<dbReference type="PANTHER" id="PTHR10270">
    <property type="entry name" value="SOX TRANSCRIPTION FACTOR"/>
    <property type="match status" value="1"/>
</dbReference>
<dbReference type="Pfam" id="PF00505">
    <property type="entry name" value="HMG_box"/>
    <property type="match status" value="1"/>
</dbReference>
<dbReference type="PIRSF" id="PIRSF037653">
    <property type="entry name" value="SRY"/>
    <property type="match status" value="1"/>
</dbReference>
<dbReference type="SMART" id="SM00398">
    <property type="entry name" value="HMG"/>
    <property type="match status" value="1"/>
</dbReference>
<dbReference type="SUPFAM" id="SSF47095">
    <property type="entry name" value="HMG-box"/>
    <property type="match status" value="1"/>
</dbReference>
<dbReference type="PROSITE" id="PS50118">
    <property type="entry name" value="HMG_BOX_2"/>
    <property type="match status" value="1"/>
</dbReference>
<gene>
    <name type="primary">SRY</name>
    <name type="synonym">TDF</name>
</gene>